<evidence type="ECO:0000250" key="1"/>
<evidence type="ECO:0000255" key="2"/>
<evidence type="ECO:0000305" key="3"/>
<organism>
    <name type="scientific">Pseudopleuronectes americanus</name>
    <name type="common">Winter flounder</name>
    <name type="synonym">Pleuronectes americanus</name>
    <dbReference type="NCBI Taxonomy" id="8265"/>
    <lineage>
        <taxon>Eukaryota</taxon>
        <taxon>Metazoa</taxon>
        <taxon>Chordata</taxon>
        <taxon>Craniata</taxon>
        <taxon>Vertebrata</taxon>
        <taxon>Euteleostomi</taxon>
        <taxon>Actinopterygii</taxon>
        <taxon>Neopterygii</taxon>
        <taxon>Teleostei</taxon>
        <taxon>Neoteleostei</taxon>
        <taxon>Acanthomorphata</taxon>
        <taxon>Carangaria</taxon>
        <taxon>Pleuronectiformes</taxon>
        <taxon>Pleuronectoidei</taxon>
        <taxon>Pleuronectidae</taxon>
        <taxon>Pseudopleuronectes</taxon>
    </lineage>
</organism>
<dbReference type="EMBL" id="X53718">
    <property type="protein sequence ID" value="CAA37754.1"/>
    <property type="molecule type" value="Genomic_DNA"/>
</dbReference>
<dbReference type="EMBL" id="AF448487">
    <property type="protein sequence ID" value="AAM75809.1"/>
    <property type="molecule type" value="mRNA"/>
</dbReference>
<dbReference type="SMR" id="P23699"/>
<dbReference type="GO" id="GO:0005576">
    <property type="term" value="C:extracellular region"/>
    <property type="evidence" value="ECO:0007669"/>
    <property type="project" value="UniProtKB-SubCell"/>
</dbReference>
<dbReference type="GO" id="GO:0016172">
    <property type="term" value="F:antifreeze activity"/>
    <property type="evidence" value="ECO:0007669"/>
    <property type="project" value="InterPro"/>
</dbReference>
<dbReference type="InterPro" id="IPR000104">
    <property type="entry name" value="Antifreeze_1"/>
</dbReference>
<dbReference type="PRINTS" id="PR00308">
    <property type="entry name" value="ANTIFREEZEI"/>
</dbReference>
<reference key="1">
    <citation type="journal article" date="1990" name="Nucleic Acids Res.">
        <title>Nucleotide sequence of a variant antifreeze protein gene.</title>
        <authorList>
            <person name="Gauthier S."/>
            <person name="Wu Y."/>
            <person name="Davies P.L."/>
        </authorList>
    </citation>
    <scope>NUCLEOTIDE SEQUENCE [GENOMIC DNA]</scope>
</reference>
<reference key="2">
    <citation type="submission" date="2001-11" db="EMBL/GenBank/DDBJ databases">
        <title>Expression of soluble winter flounder antifreeze protein with four ice-binding repeats in E. Coli.</title>
        <authorList>
            <person name="Gong H.Y."/>
            <person name="Hu M.C."/>
            <person name="Weng C.F."/>
            <person name="Huang W.T."/>
            <person name="Huang R.C."/>
            <person name="Hui C.F."/>
            <person name="Wu J.L."/>
        </authorList>
    </citation>
    <scope>NUCLEOTIDE SEQUENCE [MRNA]</scope>
</reference>
<feature type="signal peptide" evidence="2">
    <location>
        <begin position="1"/>
        <end position="21"/>
    </location>
</feature>
<feature type="propeptide" id="PRO_0000001689" description="Removed by a dipeptidylpeptidase" evidence="3">
    <location>
        <begin position="22"/>
        <end position="39"/>
    </location>
</feature>
<feature type="chain" id="PRO_0000001690" description="Ice-structuring protein">
    <location>
        <begin position="40"/>
        <end position="91"/>
    </location>
</feature>
<sequence length="91" mass="8355">MALSLFTVGQLIFLFWTMRITEANPDPAAKAVPAAAAPDTASDAAAAAAATAATAAAAAAATAVTAAKAAALTAANAAAAAAATAAAAARG</sequence>
<comment type="function">
    <text evidence="1">Contributes to protect fish blood from freezing at subzero sea water temperatures. Lowers the blood freezing point. Binds to nascent ice crystals and prevents further growth (By similarity).</text>
</comment>
<comment type="subcellular location">
    <subcellularLocation>
        <location evidence="1">Secreted</location>
    </subcellularLocation>
</comment>
<comment type="similarity">
    <text evidence="3">Belongs to the type-I AFP family.</text>
</comment>
<proteinExistence type="inferred from homology"/>
<name>ANPY_PSEAM</name>
<accession>P23699</accession>
<accession>Q547T1</accession>
<protein>
    <recommendedName>
        <fullName>Ice-structuring protein</fullName>
        <shortName>ISP</shortName>
    </recommendedName>
    <alternativeName>
        <fullName>Type I antifreeze protein IIA8</fullName>
        <shortName>AFP</shortName>
    </alternativeName>
</protein>
<keyword id="KW-0047">Antifreeze protein</keyword>
<keyword id="KW-0677">Repeat</keyword>
<keyword id="KW-0964">Secreted</keyword>
<keyword id="KW-0732">Signal</keyword>